<keyword id="KW-0249">Electron transport</keyword>
<keyword id="KW-0472">Membrane</keyword>
<keyword id="KW-0496">Mitochondrion</keyword>
<keyword id="KW-0999">Mitochondrion inner membrane</keyword>
<keyword id="KW-0520">NAD</keyword>
<keyword id="KW-0679">Respiratory chain</keyword>
<keyword id="KW-1278">Translocase</keyword>
<keyword id="KW-0812">Transmembrane</keyword>
<keyword id="KW-1133">Transmembrane helix</keyword>
<keyword id="KW-0813">Transport</keyword>
<keyword id="KW-0830">Ubiquinone</keyword>
<comment type="function">
    <text evidence="1">Core subunit of the mitochondrial membrane respiratory chain NADH dehydrogenase (Complex I) which catalyzes electron transfer from NADH through the respiratory chain, using ubiquinone as an electron acceptor. Part of the enzyme membrane arm which is embedded in the lipid bilayer and involved in proton translocation.</text>
</comment>
<comment type="catalytic activity">
    <reaction evidence="1">
        <text>a ubiquinone + NADH + 5 H(+)(in) = a ubiquinol + NAD(+) + 4 H(+)(out)</text>
        <dbReference type="Rhea" id="RHEA:29091"/>
        <dbReference type="Rhea" id="RHEA-COMP:9565"/>
        <dbReference type="Rhea" id="RHEA-COMP:9566"/>
        <dbReference type="ChEBI" id="CHEBI:15378"/>
        <dbReference type="ChEBI" id="CHEBI:16389"/>
        <dbReference type="ChEBI" id="CHEBI:17976"/>
        <dbReference type="ChEBI" id="CHEBI:57540"/>
        <dbReference type="ChEBI" id="CHEBI:57945"/>
        <dbReference type="EC" id="7.1.1.2"/>
    </reaction>
    <physiologicalReaction direction="left-to-right" evidence="1">
        <dbReference type="Rhea" id="RHEA:29092"/>
    </physiologicalReaction>
</comment>
<comment type="subunit">
    <text evidence="2">Core subunit of respiratory chain NADH dehydrogenase (Complex I) which is composed of 45 different subunits.</text>
</comment>
<comment type="subcellular location">
    <subcellularLocation>
        <location evidence="2">Mitochondrion inner membrane</location>
        <topology evidence="3">Multi-pass membrane protein</topology>
    </subcellularLocation>
</comment>
<comment type="similarity">
    <text evidence="4">Belongs to the complex I subunit 4L family.</text>
</comment>
<name>NU4LM_MONMO</name>
<feature type="chain" id="PRO_0000275068" description="NADH-ubiquinone oxidoreductase chain 4L">
    <location>
        <begin position="1"/>
        <end position="98"/>
    </location>
</feature>
<feature type="transmembrane region" description="Helical" evidence="3">
    <location>
        <begin position="1"/>
        <end position="21"/>
    </location>
</feature>
<feature type="transmembrane region" description="Helical" evidence="3">
    <location>
        <begin position="29"/>
        <end position="49"/>
    </location>
</feature>
<feature type="transmembrane region" description="Helical" evidence="3">
    <location>
        <begin position="61"/>
        <end position="81"/>
    </location>
</feature>
<gene>
    <name type="primary">MT-ND4L</name>
    <name type="synonym">MTND4L</name>
    <name type="synonym">NADH4L</name>
    <name type="synonym">ND4L</name>
</gene>
<proteinExistence type="inferred from homology"/>
<dbReference type="EC" id="7.1.1.2"/>
<dbReference type="EMBL" id="AJ554062">
    <property type="protein sequence ID" value="CAD88035.1"/>
    <property type="molecule type" value="Genomic_DNA"/>
</dbReference>
<dbReference type="RefSeq" id="NP_944758.1">
    <property type="nucleotide sequence ID" value="NC_005279.1"/>
</dbReference>
<dbReference type="SMR" id="Q70RN9"/>
<dbReference type="GeneID" id="2658709"/>
<dbReference type="CTD" id="4539"/>
<dbReference type="Proteomes" id="UP000694561">
    <property type="component" value="Unplaced"/>
</dbReference>
<dbReference type="GO" id="GO:0005743">
    <property type="term" value="C:mitochondrial inner membrane"/>
    <property type="evidence" value="ECO:0000250"/>
    <property type="project" value="UniProtKB"/>
</dbReference>
<dbReference type="GO" id="GO:0045271">
    <property type="term" value="C:respiratory chain complex I"/>
    <property type="evidence" value="ECO:0000250"/>
    <property type="project" value="UniProtKB"/>
</dbReference>
<dbReference type="GO" id="GO:0008137">
    <property type="term" value="F:NADH dehydrogenase (ubiquinone) activity"/>
    <property type="evidence" value="ECO:0000250"/>
    <property type="project" value="UniProtKB"/>
</dbReference>
<dbReference type="GO" id="GO:0042773">
    <property type="term" value="P:ATP synthesis coupled electron transport"/>
    <property type="evidence" value="ECO:0007669"/>
    <property type="project" value="InterPro"/>
</dbReference>
<dbReference type="FunFam" id="1.10.287.3510:FF:000002">
    <property type="entry name" value="NADH-ubiquinone oxidoreductase chain 4L"/>
    <property type="match status" value="1"/>
</dbReference>
<dbReference type="Gene3D" id="1.10.287.3510">
    <property type="match status" value="1"/>
</dbReference>
<dbReference type="InterPro" id="IPR001133">
    <property type="entry name" value="NADH_UbQ_OxRdtase_chain4L/K"/>
</dbReference>
<dbReference type="InterPro" id="IPR039428">
    <property type="entry name" value="NUOK/Mnh_C1-like"/>
</dbReference>
<dbReference type="PANTHER" id="PTHR11434:SF0">
    <property type="entry name" value="NADH-UBIQUINONE OXIDOREDUCTASE CHAIN 4L"/>
    <property type="match status" value="1"/>
</dbReference>
<dbReference type="PANTHER" id="PTHR11434">
    <property type="entry name" value="NADH-UBIQUINONE OXIDOREDUCTASE SUBUNIT ND4L"/>
    <property type="match status" value="1"/>
</dbReference>
<dbReference type="Pfam" id="PF00420">
    <property type="entry name" value="Oxidored_q2"/>
    <property type="match status" value="1"/>
</dbReference>
<protein>
    <recommendedName>
        <fullName>NADH-ubiquinone oxidoreductase chain 4L</fullName>
        <ecNumber>7.1.1.2</ecNumber>
    </recommendedName>
    <alternativeName>
        <fullName>NADH dehydrogenase subunit 4L</fullName>
    </alternativeName>
</protein>
<reference key="1">
    <citation type="journal article" date="2004" name="Gene">
        <title>Mitogenomic analyses provide new insights into cetacean origin and evolution.</title>
        <authorList>
            <person name="Arnason U."/>
            <person name="Gullberg A."/>
            <person name="Janke A."/>
        </authorList>
    </citation>
    <scope>NUCLEOTIDE SEQUENCE [GENOMIC DNA]</scope>
</reference>
<geneLocation type="mitochondrion"/>
<sequence length="98" mass="10768">MSLVHINILMAFTMSLTGLLMYRSHLMSALLCLEGMVLSLFILATLTILNSHFTLANMMPIILLVFAACEAAIGLALLIMISNTYGTDYVQNLNLLQC</sequence>
<accession>Q70RN9</accession>
<evidence type="ECO:0000250" key="1">
    <source>
        <dbReference type="UniProtKB" id="P03901"/>
    </source>
</evidence>
<evidence type="ECO:0000250" key="2">
    <source>
        <dbReference type="UniProtKB" id="P03902"/>
    </source>
</evidence>
<evidence type="ECO:0000255" key="3"/>
<evidence type="ECO:0000305" key="4"/>
<organism>
    <name type="scientific">Monodon monoceros</name>
    <name type="common">Narwhal</name>
    <name type="synonym">Ceratodon monodon</name>
    <dbReference type="NCBI Taxonomy" id="40151"/>
    <lineage>
        <taxon>Eukaryota</taxon>
        <taxon>Metazoa</taxon>
        <taxon>Chordata</taxon>
        <taxon>Craniata</taxon>
        <taxon>Vertebrata</taxon>
        <taxon>Euteleostomi</taxon>
        <taxon>Mammalia</taxon>
        <taxon>Eutheria</taxon>
        <taxon>Laurasiatheria</taxon>
        <taxon>Artiodactyla</taxon>
        <taxon>Whippomorpha</taxon>
        <taxon>Cetacea</taxon>
        <taxon>Odontoceti</taxon>
        <taxon>Monodontidae</taxon>
        <taxon>Monodon</taxon>
    </lineage>
</organism>